<proteinExistence type="inferred from homology"/>
<organism>
    <name type="scientific">Phocaeicola vulgatus (strain ATCC 8482 / DSM 1447 / JCM 5826 / CCUG 4940 / NBRC 14291 / NCTC 11154)</name>
    <name type="common">Bacteroides vulgatus</name>
    <dbReference type="NCBI Taxonomy" id="435590"/>
    <lineage>
        <taxon>Bacteria</taxon>
        <taxon>Pseudomonadati</taxon>
        <taxon>Bacteroidota</taxon>
        <taxon>Bacteroidia</taxon>
        <taxon>Bacteroidales</taxon>
        <taxon>Bacteroidaceae</taxon>
        <taxon>Phocaeicola</taxon>
    </lineage>
</organism>
<sequence length="162" mass="17965">MRHNKKFNHLGRTASHRSAMLSNMACSLIKHKRITTTVAKAKALKKFVEPLITKSKDDTTNSRRVVFSNLQDKFAVTELFKEISVKVADRPGGYTRIIKTGHRLGDNAEMCFIELVDYDENMAKTATAKKATRTRRSKKSAAATEAPAAPAAETTEEAPKAE</sequence>
<feature type="chain" id="PRO_1000055770" description="Large ribosomal subunit protein bL17">
    <location>
        <begin position="1"/>
        <end position="162"/>
    </location>
</feature>
<feature type="region of interest" description="Disordered" evidence="2">
    <location>
        <begin position="126"/>
        <end position="162"/>
    </location>
</feature>
<feature type="compositionally biased region" description="Basic residues" evidence="2">
    <location>
        <begin position="130"/>
        <end position="139"/>
    </location>
</feature>
<feature type="compositionally biased region" description="Low complexity" evidence="2">
    <location>
        <begin position="140"/>
        <end position="153"/>
    </location>
</feature>
<evidence type="ECO:0000255" key="1">
    <source>
        <dbReference type="HAMAP-Rule" id="MF_01368"/>
    </source>
</evidence>
<evidence type="ECO:0000256" key="2">
    <source>
        <dbReference type="SAM" id="MobiDB-lite"/>
    </source>
</evidence>
<evidence type="ECO:0000305" key="3"/>
<dbReference type="EMBL" id="CP000139">
    <property type="protein sequence ID" value="ABR38483.1"/>
    <property type="molecule type" value="Genomic_DNA"/>
</dbReference>
<dbReference type="RefSeq" id="WP_005844904.1">
    <property type="nucleotide sequence ID" value="NZ_JANSWM010000035.1"/>
</dbReference>
<dbReference type="SMR" id="A6KYG9"/>
<dbReference type="STRING" id="435590.BVU_0779"/>
<dbReference type="PaxDb" id="435590-BVU_0779"/>
<dbReference type="GeneID" id="82155733"/>
<dbReference type="KEGG" id="bvu:BVU_0779"/>
<dbReference type="eggNOG" id="COG0203">
    <property type="taxonomic scope" value="Bacteria"/>
</dbReference>
<dbReference type="HOGENOM" id="CLU_074407_0_1_10"/>
<dbReference type="BioCyc" id="BVUL435590:G1G59-819-MONOMER"/>
<dbReference type="Proteomes" id="UP000002861">
    <property type="component" value="Chromosome"/>
</dbReference>
<dbReference type="GO" id="GO:0022625">
    <property type="term" value="C:cytosolic large ribosomal subunit"/>
    <property type="evidence" value="ECO:0007669"/>
    <property type="project" value="TreeGrafter"/>
</dbReference>
<dbReference type="GO" id="GO:0003735">
    <property type="term" value="F:structural constituent of ribosome"/>
    <property type="evidence" value="ECO:0007669"/>
    <property type="project" value="InterPro"/>
</dbReference>
<dbReference type="GO" id="GO:0006412">
    <property type="term" value="P:translation"/>
    <property type="evidence" value="ECO:0007669"/>
    <property type="project" value="UniProtKB-UniRule"/>
</dbReference>
<dbReference type="FunFam" id="3.90.1030.10:FF:000006">
    <property type="entry name" value="50S ribosomal protein L17"/>
    <property type="match status" value="1"/>
</dbReference>
<dbReference type="Gene3D" id="3.90.1030.10">
    <property type="entry name" value="Ribosomal protein L17"/>
    <property type="match status" value="1"/>
</dbReference>
<dbReference type="HAMAP" id="MF_01368">
    <property type="entry name" value="Ribosomal_bL17"/>
    <property type="match status" value="1"/>
</dbReference>
<dbReference type="InterPro" id="IPR000456">
    <property type="entry name" value="Ribosomal_bL17"/>
</dbReference>
<dbReference type="InterPro" id="IPR047859">
    <property type="entry name" value="Ribosomal_bL17_CS"/>
</dbReference>
<dbReference type="InterPro" id="IPR036373">
    <property type="entry name" value="Ribosomal_bL17_sf"/>
</dbReference>
<dbReference type="NCBIfam" id="TIGR00059">
    <property type="entry name" value="L17"/>
    <property type="match status" value="1"/>
</dbReference>
<dbReference type="PANTHER" id="PTHR14413:SF16">
    <property type="entry name" value="LARGE RIBOSOMAL SUBUNIT PROTEIN BL17M"/>
    <property type="match status" value="1"/>
</dbReference>
<dbReference type="PANTHER" id="PTHR14413">
    <property type="entry name" value="RIBOSOMAL PROTEIN L17"/>
    <property type="match status" value="1"/>
</dbReference>
<dbReference type="Pfam" id="PF01196">
    <property type="entry name" value="Ribosomal_L17"/>
    <property type="match status" value="1"/>
</dbReference>
<dbReference type="SUPFAM" id="SSF64263">
    <property type="entry name" value="Prokaryotic ribosomal protein L17"/>
    <property type="match status" value="1"/>
</dbReference>
<dbReference type="PROSITE" id="PS01167">
    <property type="entry name" value="RIBOSOMAL_L17"/>
    <property type="match status" value="1"/>
</dbReference>
<accession>A6KYG9</accession>
<gene>
    <name evidence="1" type="primary">rplQ</name>
    <name type="ordered locus">BVU_0779</name>
</gene>
<protein>
    <recommendedName>
        <fullName evidence="1">Large ribosomal subunit protein bL17</fullName>
    </recommendedName>
    <alternativeName>
        <fullName evidence="3">50S ribosomal protein L17</fullName>
    </alternativeName>
</protein>
<reference key="1">
    <citation type="journal article" date="2007" name="PLoS Biol.">
        <title>Evolution of symbiotic bacteria in the distal human intestine.</title>
        <authorList>
            <person name="Xu J."/>
            <person name="Mahowald M.A."/>
            <person name="Ley R.E."/>
            <person name="Lozupone C.A."/>
            <person name="Hamady M."/>
            <person name="Martens E.C."/>
            <person name="Henrissat B."/>
            <person name="Coutinho P.M."/>
            <person name="Minx P."/>
            <person name="Latreille P."/>
            <person name="Cordum H."/>
            <person name="Van Brunt A."/>
            <person name="Kim K."/>
            <person name="Fulton R.S."/>
            <person name="Fulton L.A."/>
            <person name="Clifton S.W."/>
            <person name="Wilson R.K."/>
            <person name="Knight R.D."/>
            <person name="Gordon J.I."/>
        </authorList>
    </citation>
    <scope>NUCLEOTIDE SEQUENCE [LARGE SCALE GENOMIC DNA]</scope>
    <source>
        <strain>ATCC 8482 / DSM 1447 / JCM 5826 / CCUG 4940 / NBRC 14291 / NCTC 11154</strain>
    </source>
</reference>
<name>RL17_PHOV8</name>
<comment type="subunit">
    <text evidence="1">Part of the 50S ribosomal subunit. Contacts protein L32.</text>
</comment>
<comment type="similarity">
    <text evidence="1">Belongs to the bacterial ribosomal protein bL17 family.</text>
</comment>
<keyword id="KW-0687">Ribonucleoprotein</keyword>
<keyword id="KW-0689">Ribosomal protein</keyword>